<evidence type="ECO:0000250" key="1"/>
<evidence type="ECO:0000255" key="2"/>
<evidence type="ECO:0000305" key="3"/>
<name>LKA2A_MANHA</name>
<dbReference type="EMBL" id="AF314512">
    <property type="protein sequence ID" value="AAG40296.1"/>
    <property type="molecule type" value="Genomic_DNA"/>
</dbReference>
<dbReference type="SMR" id="Q9EV30"/>
<dbReference type="GO" id="GO:0005576">
    <property type="term" value="C:extracellular region"/>
    <property type="evidence" value="ECO:0007669"/>
    <property type="project" value="UniProtKB-SubCell"/>
</dbReference>
<dbReference type="GO" id="GO:0020002">
    <property type="term" value="C:host cell plasma membrane"/>
    <property type="evidence" value="ECO:0007669"/>
    <property type="project" value="UniProtKB-SubCell"/>
</dbReference>
<dbReference type="GO" id="GO:0016020">
    <property type="term" value="C:membrane"/>
    <property type="evidence" value="ECO:0007669"/>
    <property type="project" value="UniProtKB-KW"/>
</dbReference>
<dbReference type="GO" id="GO:0005509">
    <property type="term" value="F:calcium ion binding"/>
    <property type="evidence" value="ECO:0007669"/>
    <property type="project" value="InterPro"/>
</dbReference>
<dbReference type="GO" id="GO:0015267">
    <property type="term" value="F:channel activity"/>
    <property type="evidence" value="ECO:0007669"/>
    <property type="project" value="InterPro"/>
</dbReference>
<dbReference type="GO" id="GO:0090729">
    <property type="term" value="F:toxin activity"/>
    <property type="evidence" value="ECO:0007669"/>
    <property type="project" value="UniProtKB-KW"/>
</dbReference>
<dbReference type="GO" id="GO:0031640">
    <property type="term" value="P:killing of cells of another organism"/>
    <property type="evidence" value="ECO:0007669"/>
    <property type="project" value="UniProtKB-KW"/>
</dbReference>
<dbReference type="Gene3D" id="2.150.10.10">
    <property type="entry name" value="Serralysin-like metalloprotease, C-terminal"/>
    <property type="match status" value="1"/>
</dbReference>
<dbReference type="InterPro" id="IPR018511">
    <property type="entry name" value="Hemolysin-typ_Ca-bd_CS"/>
</dbReference>
<dbReference type="InterPro" id="IPR001343">
    <property type="entry name" value="Hemolysn_Ca-bd"/>
</dbReference>
<dbReference type="InterPro" id="IPR013550">
    <property type="entry name" value="RTX_C"/>
</dbReference>
<dbReference type="InterPro" id="IPR018504">
    <property type="entry name" value="RTX_pore_form"/>
</dbReference>
<dbReference type="InterPro" id="IPR050557">
    <property type="entry name" value="RTX_toxin/Mannuronan_C5-epim"/>
</dbReference>
<dbReference type="InterPro" id="IPR003995">
    <property type="entry name" value="RTX_toxin_determinant-A"/>
</dbReference>
<dbReference type="InterPro" id="IPR011049">
    <property type="entry name" value="Serralysin-like_metalloprot_C"/>
</dbReference>
<dbReference type="NCBIfam" id="NF033943">
    <property type="entry name" value="RTX_toxin"/>
    <property type="match status" value="1"/>
</dbReference>
<dbReference type="PANTHER" id="PTHR38340">
    <property type="entry name" value="S-LAYER PROTEIN"/>
    <property type="match status" value="1"/>
</dbReference>
<dbReference type="PANTHER" id="PTHR38340:SF1">
    <property type="entry name" value="S-LAYER PROTEIN"/>
    <property type="match status" value="1"/>
</dbReference>
<dbReference type="Pfam" id="PF00353">
    <property type="entry name" value="HemolysinCabind"/>
    <property type="match status" value="3"/>
</dbReference>
<dbReference type="Pfam" id="PF02382">
    <property type="entry name" value="RTX"/>
    <property type="match status" value="1"/>
</dbReference>
<dbReference type="Pfam" id="PF08339">
    <property type="entry name" value="RTX_C"/>
    <property type="match status" value="1"/>
</dbReference>
<dbReference type="PRINTS" id="PR00313">
    <property type="entry name" value="CABNDNGRPT"/>
</dbReference>
<dbReference type="PRINTS" id="PR01488">
    <property type="entry name" value="RTXTOXINA"/>
</dbReference>
<dbReference type="SUPFAM" id="SSF51120">
    <property type="entry name" value="beta-Roll"/>
    <property type="match status" value="1"/>
</dbReference>
<dbReference type="PROSITE" id="PS00330">
    <property type="entry name" value="HEMOLYSIN_CALCIUM"/>
    <property type="match status" value="4"/>
</dbReference>
<reference key="1">
    <citation type="journal article" date="2001" name="J. Bacteriol.">
        <title>Sequence diversity and molecular evolution of the leukotoxin (lktA) gene in bovine and ovine strains of Mannheimia (Pasteurella) haemolytica.</title>
        <authorList>
            <person name="Davies R.L."/>
            <person name="Whittam T.S."/>
            <person name="Selander R.K."/>
        </authorList>
    </citation>
    <scope>NUCLEOTIDE SEQUENCE [GENOMIC DNA]</scope>
    <source>
        <strain>Serotype A2 / PH196</strain>
    </source>
</reference>
<keyword id="KW-0106">Calcium</keyword>
<keyword id="KW-0204">Cytolysis</keyword>
<keyword id="KW-0354">Hemolysis</keyword>
<keyword id="KW-1032">Host cell membrane</keyword>
<keyword id="KW-1043">Host membrane</keyword>
<keyword id="KW-0449">Lipoprotein</keyword>
<keyword id="KW-0472">Membrane</keyword>
<keyword id="KW-0677">Repeat</keyword>
<keyword id="KW-0964">Secreted</keyword>
<keyword id="KW-0800">Toxin</keyword>
<keyword id="KW-0812">Transmembrane</keyword>
<keyword id="KW-1133">Transmembrane helix</keyword>
<keyword id="KW-0843">Virulence</keyword>
<accession>Q9EV30</accession>
<sequence>MGTRLTTLSNGLKNTLTATKSGLHKAGQSLTQAGSSLKTGAKKIILYIPQNYQYDTEQGNGLQDLVKAAEELGIEVQREERNDIATAQTSLGTIQTAIGLTERGIVLSAPQIDKLLQKTKAGQALGSAESIVQNANKAKTVLSGIQSILGSVLAGMDLDEALQNNSNQHALAKAGLELTNSLIENIANSVKTLDEFGEQISQFGSKLQNIKGLGTLGDKLKNIGGLDKAGLGLDVISGLLSGATAALVLADKNASTAKKVGAGFELANQVVGNITKAVSSYILAQRVAAGLSSTGPVAALIASTVSLAISPLAFAGIADKFNHAKSLESYAERFKKLGYDGDNLLAEYQRGTGTIDASVTAINTALAAIAGGVSAAAAGSVIASPIALLVSGITGVISTILQYSKQAMFEHVANKIHNKIVEWEKNNQGKNYFENGYDARYLANLQDNMKFLLNLNKELQAERVIAITQQQWDSNIGDLAGISRLGEKVISGKAYVDAFEEGKHIKADKLVQLDSAKGIIDVSNTGEAKTQHILFRTPLLTPGTEKRERVQTGKYEYITKLNINRVDSWQIKDGAASSTFDLTNVVQRIGIELDHAENVTKTKETKIVAKLGAGDDNVFVGSGTTEIDGGEGYDRVHYSRGNYGALTIDATKETVQGSYTVNRFVETGKALHEVTSTHTALVGSREEKIEYRHSNNRQHAGYYTKDTLTTIEEIIGTSHNDIFRGSKFNDAFQGGDGVDTIDGNDGNDRLFGGKGDDIIDGGNGDDFIDGGKGNDLLHGGRGDDIFVHRKGDGNDIISDSDGNDKLSFSDSNLKDLTFEKVKYNLVITNSNKEKVTIQNWFREADLAKEVHNYKATADEKIEEIIGQNGERITSKQVDDLIEKGNGKITQDELSKAVDNYELLKHSKNVTNSLDKLISSVSSFTSSNDSRNVLVAPASMLDQSLSSLQFARAA</sequence>
<organism>
    <name type="scientific">Mannheimia haemolytica</name>
    <name type="common">Pasteurella haemolytica</name>
    <dbReference type="NCBI Taxonomy" id="75985"/>
    <lineage>
        <taxon>Bacteria</taxon>
        <taxon>Pseudomonadati</taxon>
        <taxon>Pseudomonadota</taxon>
        <taxon>Gammaproteobacteria</taxon>
        <taxon>Pasteurellales</taxon>
        <taxon>Pasteurellaceae</taxon>
        <taxon>Mannheimia</taxon>
    </lineage>
</organism>
<proteinExistence type="inferred from homology"/>
<gene>
    <name type="primary">lktA</name>
</gene>
<feature type="chain" id="PRO_0000196221" description="Leukotoxin">
    <location>
        <begin position="1"/>
        <end position="953"/>
    </location>
</feature>
<feature type="transmembrane region" description="Helical" evidence="2">
    <location>
        <begin position="229"/>
        <end position="249"/>
    </location>
</feature>
<feature type="transmembrane region" description="Helical" evidence="2">
    <location>
        <begin position="297"/>
        <end position="317"/>
    </location>
</feature>
<feature type="transmembrane region" description="Helical" evidence="2">
    <location>
        <begin position="359"/>
        <end position="379"/>
    </location>
</feature>
<feature type="transmembrane region" description="Helical" evidence="2">
    <location>
        <begin position="381"/>
        <end position="401"/>
    </location>
</feature>
<feature type="repeat" description="Hemolysin-type calcium-binding 1">
    <location>
        <begin position="715"/>
        <end position="732"/>
    </location>
</feature>
<feature type="repeat" description="Hemolysin-type calcium-binding 2">
    <location>
        <begin position="733"/>
        <end position="750"/>
    </location>
</feature>
<feature type="repeat" description="Hemolysin-type calcium-binding 3">
    <location>
        <begin position="751"/>
        <end position="768"/>
    </location>
</feature>
<feature type="repeat" description="Hemolysin-type calcium-binding 4">
    <location>
        <begin position="769"/>
        <end position="786"/>
    </location>
</feature>
<feature type="repeat" description="Hemolysin-type calcium-binding 5">
    <location>
        <begin position="789"/>
        <end position="806"/>
    </location>
</feature>
<protein>
    <recommendedName>
        <fullName>Leukotoxin</fullName>
        <shortName>Lkt</shortName>
    </recommendedName>
</protein>
<comment type="function">
    <text evidence="1">Pasteurella leukotoxins are exotoxins that attack host leukocytes and especially polymorphonuclear cells, by causing cell rupture. The leukotoxin binds to the host LFA-1 integrin and induces a signaling cascade leading to many biological effects, including tyrosine phosphorylation of the CD18 tail, elevation of the intracellular Ca(2+) and lysis of the host cell (By similarity). This leukotoxin is a major contributor to the pathogenesis of lung injury in bovine pneumonic pasteurellosis. It also has weak hemolytic activity.</text>
</comment>
<comment type="subcellular location">
    <subcellularLocation>
        <location evidence="1">Secreted</location>
    </subcellularLocation>
    <subcellularLocation>
        <location evidence="1">Host cell membrane</location>
        <topology evidence="1">Multi-pass membrane protein</topology>
    </subcellularLocation>
</comment>
<comment type="domain">
    <text evidence="1">The transmembrane domains are believed to be involved in pore formation in target cells.</text>
</comment>
<comment type="domain">
    <text evidence="1">The Gly-rich region is probably involved in calcium binding, which is required for target cell-binding and cytolytic activity.</text>
</comment>
<comment type="domain">
    <text evidence="1">The C-terminal domain contains an export signal that is recognized by the ABC transporter complex LktBD.</text>
</comment>
<comment type="PTM">
    <text evidence="1">Acylated by LktC. The toxin only becomes active when modified (By similarity).</text>
</comment>
<comment type="miscellaneous">
    <text>The lktCABD operon has a complex mosaic structure that has been derived by extensive inter- and intraspecies horizontal DNA transfer and intragenic recombination events.</text>
</comment>
<comment type="similarity">
    <text evidence="3">Belongs to the RTX prokaryotic toxin (TC 1.C.11) family.</text>
</comment>